<gene>
    <name evidence="1" type="primary">rplB</name>
    <name type="ordered locus">jhp_1236</name>
</gene>
<comment type="function">
    <text evidence="1">One of the primary rRNA binding proteins. Required for association of the 30S and 50S subunits to form the 70S ribosome, for tRNA binding and peptide bond formation. It has been suggested to have peptidyltransferase activity; this is somewhat controversial. Makes several contacts with the 16S rRNA in the 70S ribosome.</text>
</comment>
<comment type="subunit">
    <text evidence="1">Part of the 50S ribosomal subunit. Forms a bridge to the 30S subunit in the 70S ribosome.</text>
</comment>
<comment type="similarity">
    <text evidence="1">Belongs to the universal ribosomal protein uL2 family.</text>
</comment>
<keyword id="KW-0687">Ribonucleoprotein</keyword>
<keyword id="KW-0689">Ribosomal protein</keyword>
<keyword id="KW-0694">RNA-binding</keyword>
<keyword id="KW-0699">rRNA-binding</keyword>
<accession>Q9ZJR6</accession>
<proteinExistence type="inferred from homology"/>
<reference key="1">
    <citation type="journal article" date="1999" name="Nature">
        <title>Genomic sequence comparison of two unrelated isolates of the human gastric pathogen Helicobacter pylori.</title>
        <authorList>
            <person name="Alm R.A."/>
            <person name="Ling L.-S.L."/>
            <person name="Moir D.T."/>
            <person name="King B.L."/>
            <person name="Brown E.D."/>
            <person name="Doig P.C."/>
            <person name="Smith D.R."/>
            <person name="Noonan B."/>
            <person name="Guild B.C."/>
            <person name="deJonge B.L."/>
            <person name="Carmel G."/>
            <person name="Tummino P.J."/>
            <person name="Caruso A."/>
            <person name="Uria-Nickelsen M."/>
            <person name="Mills D.M."/>
            <person name="Ives C."/>
            <person name="Gibson R."/>
            <person name="Merberg D."/>
            <person name="Mills S.D."/>
            <person name="Jiang Q."/>
            <person name="Taylor D.E."/>
            <person name="Vovis G.F."/>
            <person name="Trust T.J."/>
        </authorList>
    </citation>
    <scope>NUCLEOTIDE SEQUENCE [LARGE SCALE GENOMIC DNA]</scope>
    <source>
        <strain>J99 / ATCC 700824</strain>
    </source>
</reference>
<protein>
    <recommendedName>
        <fullName evidence="1">Large ribosomal subunit protein uL2</fullName>
    </recommendedName>
    <alternativeName>
        <fullName evidence="3">50S ribosomal protein L2</fullName>
    </alternativeName>
</protein>
<organism>
    <name type="scientific">Helicobacter pylori (strain J99 / ATCC 700824)</name>
    <name type="common">Campylobacter pylori J99</name>
    <dbReference type="NCBI Taxonomy" id="85963"/>
    <lineage>
        <taxon>Bacteria</taxon>
        <taxon>Pseudomonadati</taxon>
        <taxon>Campylobacterota</taxon>
        <taxon>Epsilonproteobacteria</taxon>
        <taxon>Campylobacterales</taxon>
        <taxon>Helicobacteraceae</taxon>
        <taxon>Helicobacter</taxon>
    </lineage>
</organism>
<evidence type="ECO:0000255" key="1">
    <source>
        <dbReference type="HAMAP-Rule" id="MF_01320"/>
    </source>
</evidence>
<evidence type="ECO:0000256" key="2">
    <source>
        <dbReference type="SAM" id="MobiDB-lite"/>
    </source>
</evidence>
<evidence type="ECO:0000305" key="3"/>
<name>RL2_HELPJ</name>
<feature type="chain" id="PRO_0000129570" description="Large ribosomal subunit protein uL2">
    <location>
        <begin position="1"/>
        <end position="276"/>
    </location>
</feature>
<feature type="region of interest" description="Disordered" evidence="2">
    <location>
        <begin position="212"/>
        <end position="276"/>
    </location>
</feature>
<feature type="compositionally biased region" description="Basic residues" evidence="2">
    <location>
        <begin position="257"/>
        <end position="276"/>
    </location>
</feature>
<sequence>MAIKTYKPYTPSRRFMSVLDSKDITAKSSVKGLLTKLKATAGRNNNGRITSRHKERGAKKLYRIIDFKRNKYNIEGKVAAIEYDPYRNARIALVVYPDGDKRYILQPSGLKVGDSVIAAEGGLDIKVGFAMKLKNIPIGTVVHNIEMHPGAGGQLARSAGMSAQIMGRENKYTILRMPSSEMRYILSECMASVGVVGNEDFINVSIGKAGRNRHRGIRPQTRGSAMNPVDHPHGGGEGKTGTSGHPVSPWGTPAKGYKTRKKKASDKLIISRKKHK</sequence>
<dbReference type="EMBL" id="AE001439">
    <property type="protein sequence ID" value="AAD06787.1"/>
    <property type="molecule type" value="Genomic_DNA"/>
</dbReference>
<dbReference type="PIR" id="D71835">
    <property type="entry name" value="D71835"/>
</dbReference>
<dbReference type="RefSeq" id="WP_000985811.1">
    <property type="nucleotide sequence ID" value="NZ_CP011330.1"/>
</dbReference>
<dbReference type="SMR" id="Q9ZJR6"/>
<dbReference type="GeneID" id="93237553"/>
<dbReference type="KEGG" id="hpj:jhp_1236"/>
<dbReference type="PATRIC" id="fig|85963.30.peg.1335"/>
<dbReference type="eggNOG" id="COG0090">
    <property type="taxonomic scope" value="Bacteria"/>
</dbReference>
<dbReference type="Proteomes" id="UP000000804">
    <property type="component" value="Chromosome"/>
</dbReference>
<dbReference type="GO" id="GO:0015934">
    <property type="term" value="C:large ribosomal subunit"/>
    <property type="evidence" value="ECO:0007669"/>
    <property type="project" value="InterPro"/>
</dbReference>
<dbReference type="GO" id="GO:0019843">
    <property type="term" value="F:rRNA binding"/>
    <property type="evidence" value="ECO:0007669"/>
    <property type="project" value="UniProtKB-UniRule"/>
</dbReference>
<dbReference type="GO" id="GO:0003735">
    <property type="term" value="F:structural constituent of ribosome"/>
    <property type="evidence" value="ECO:0007669"/>
    <property type="project" value="InterPro"/>
</dbReference>
<dbReference type="GO" id="GO:0016740">
    <property type="term" value="F:transferase activity"/>
    <property type="evidence" value="ECO:0007669"/>
    <property type="project" value="InterPro"/>
</dbReference>
<dbReference type="GO" id="GO:0002181">
    <property type="term" value="P:cytoplasmic translation"/>
    <property type="evidence" value="ECO:0007669"/>
    <property type="project" value="TreeGrafter"/>
</dbReference>
<dbReference type="FunFam" id="2.30.30.30:FF:000001">
    <property type="entry name" value="50S ribosomal protein L2"/>
    <property type="match status" value="1"/>
</dbReference>
<dbReference type="FunFam" id="2.40.50.140:FF:000003">
    <property type="entry name" value="50S ribosomal protein L2"/>
    <property type="match status" value="1"/>
</dbReference>
<dbReference type="FunFam" id="4.10.950.10:FF:000001">
    <property type="entry name" value="50S ribosomal protein L2"/>
    <property type="match status" value="1"/>
</dbReference>
<dbReference type="Gene3D" id="2.30.30.30">
    <property type="match status" value="1"/>
</dbReference>
<dbReference type="Gene3D" id="2.40.50.140">
    <property type="entry name" value="Nucleic acid-binding proteins"/>
    <property type="match status" value="1"/>
</dbReference>
<dbReference type="Gene3D" id="4.10.950.10">
    <property type="entry name" value="Ribosomal protein L2, domain 3"/>
    <property type="match status" value="1"/>
</dbReference>
<dbReference type="HAMAP" id="MF_01320_B">
    <property type="entry name" value="Ribosomal_uL2_B"/>
    <property type="match status" value="1"/>
</dbReference>
<dbReference type="InterPro" id="IPR012340">
    <property type="entry name" value="NA-bd_OB-fold"/>
</dbReference>
<dbReference type="InterPro" id="IPR014722">
    <property type="entry name" value="Rib_uL2_dom2"/>
</dbReference>
<dbReference type="InterPro" id="IPR002171">
    <property type="entry name" value="Ribosomal_uL2"/>
</dbReference>
<dbReference type="InterPro" id="IPR005880">
    <property type="entry name" value="Ribosomal_uL2_bac/org-type"/>
</dbReference>
<dbReference type="InterPro" id="IPR022669">
    <property type="entry name" value="Ribosomal_uL2_C"/>
</dbReference>
<dbReference type="InterPro" id="IPR022671">
    <property type="entry name" value="Ribosomal_uL2_CS"/>
</dbReference>
<dbReference type="InterPro" id="IPR014726">
    <property type="entry name" value="Ribosomal_uL2_dom3"/>
</dbReference>
<dbReference type="InterPro" id="IPR022666">
    <property type="entry name" value="Ribosomal_uL2_RNA-bd_dom"/>
</dbReference>
<dbReference type="InterPro" id="IPR008991">
    <property type="entry name" value="Translation_prot_SH3-like_sf"/>
</dbReference>
<dbReference type="NCBIfam" id="TIGR01171">
    <property type="entry name" value="rplB_bact"/>
    <property type="match status" value="1"/>
</dbReference>
<dbReference type="PANTHER" id="PTHR13691:SF5">
    <property type="entry name" value="LARGE RIBOSOMAL SUBUNIT PROTEIN UL2M"/>
    <property type="match status" value="1"/>
</dbReference>
<dbReference type="PANTHER" id="PTHR13691">
    <property type="entry name" value="RIBOSOMAL PROTEIN L2"/>
    <property type="match status" value="1"/>
</dbReference>
<dbReference type="Pfam" id="PF00181">
    <property type="entry name" value="Ribosomal_L2"/>
    <property type="match status" value="1"/>
</dbReference>
<dbReference type="Pfam" id="PF03947">
    <property type="entry name" value="Ribosomal_L2_C"/>
    <property type="match status" value="1"/>
</dbReference>
<dbReference type="PIRSF" id="PIRSF002158">
    <property type="entry name" value="Ribosomal_L2"/>
    <property type="match status" value="1"/>
</dbReference>
<dbReference type="SMART" id="SM01383">
    <property type="entry name" value="Ribosomal_L2"/>
    <property type="match status" value="1"/>
</dbReference>
<dbReference type="SMART" id="SM01382">
    <property type="entry name" value="Ribosomal_L2_C"/>
    <property type="match status" value="1"/>
</dbReference>
<dbReference type="SUPFAM" id="SSF50249">
    <property type="entry name" value="Nucleic acid-binding proteins"/>
    <property type="match status" value="1"/>
</dbReference>
<dbReference type="SUPFAM" id="SSF50104">
    <property type="entry name" value="Translation proteins SH3-like domain"/>
    <property type="match status" value="1"/>
</dbReference>
<dbReference type="PROSITE" id="PS00467">
    <property type="entry name" value="RIBOSOMAL_L2"/>
    <property type="match status" value="1"/>
</dbReference>